<reference key="1">
    <citation type="journal article" date="2009" name="BMC Genomics">
        <title>Genome evolution driven by host adaptations results in a more virulent and antimicrobial-resistant Streptococcus pneumoniae serotype 14.</title>
        <authorList>
            <person name="Ding F."/>
            <person name="Tang P."/>
            <person name="Hsu M.-H."/>
            <person name="Cui P."/>
            <person name="Hu S."/>
            <person name="Yu J."/>
            <person name="Chiu C.-H."/>
        </authorList>
    </citation>
    <scope>NUCLEOTIDE SEQUENCE [LARGE SCALE GENOMIC DNA]</scope>
    <source>
        <strain>CGSP14</strain>
    </source>
</reference>
<proteinExistence type="inferred from homology"/>
<name>DER_STRPS</name>
<protein>
    <recommendedName>
        <fullName evidence="1">GTPase Der</fullName>
    </recommendedName>
    <alternativeName>
        <fullName evidence="1">GTP-binding protein EngA</fullName>
    </alternativeName>
</protein>
<comment type="function">
    <text evidence="1">GTPase that plays an essential role in the late steps of ribosome biogenesis.</text>
</comment>
<comment type="subunit">
    <text evidence="1">Associates with the 50S ribosomal subunit.</text>
</comment>
<comment type="similarity">
    <text evidence="1">Belongs to the TRAFAC class TrmE-Era-EngA-EngB-Septin-like GTPase superfamily. EngA (Der) GTPase family.</text>
</comment>
<accession>B2IRW4</accession>
<keyword id="KW-0342">GTP-binding</keyword>
<keyword id="KW-0547">Nucleotide-binding</keyword>
<keyword id="KW-0677">Repeat</keyword>
<keyword id="KW-0690">Ribosome biogenesis</keyword>
<dbReference type="EMBL" id="CP001033">
    <property type="protein sequence ID" value="ACB90933.1"/>
    <property type="molecule type" value="Genomic_DNA"/>
</dbReference>
<dbReference type="RefSeq" id="WP_001207696.1">
    <property type="nucleotide sequence ID" value="NC_010582.1"/>
</dbReference>
<dbReference type="SMR" id="B2IRW4"/>
<dbReference type="GeneID" id="93740105"/>
<dbReference type="KEGG" id="spw:SPCG_1681"/>
<dbReference type="HOGENOM" id="CLU_016077_6_2_9"/>
<dbReference type="GO" id="GO:0005525">
    <property type="term" value="F:GTP binding"/>
    <property type="evidence" value="ECO:0007669"/>
    <property type="project" value="UniProtKB-UniRule"/>
</dbReference>
<dbReference type="GO" id="GO:0043022">
    <property type="term" value="F:ribosome binding"/>
    <property type="evidence" value="ECO:0007669"/>
    <property type="project" value="TreeGrafter"/>
</dbReference>
<dbReference type="GO" id="GO:0042254">
    <property type="term" value="P:ribosome biogenesis"/>
    <property type="evidence" value="ECO:0007669"/>
    <property type="project" value="UniProtKB-KW"/>
</dbReference>
<dbReference type="CDD" id="cd01894">
    <property type="entry name" value="EngA1"/>
    <property type="match status" value="1"/>
</dbReference>
<dbReference type="CDD" id="cd01895">
    <property type="entry name" value="EngA2"/>
    <property type="match status" value="1"/>
</dbReference>
<dbReference type="FunFam" id="3.30.300.20:FF:000004">
    <property type="entry name" value="GTPase Der"/>
    <property type="match status" value="1"/>
</dbReference>
<dbReference type="FunFam" id="3.40.50.300:FF:000040">
    <property type="entry name" value="GTPase Der"/>
    <property type="match status" value="1"/>
</dbReference>
<dbReference type="FunFam" id="3.40.50.300:FF:000057">
    <property type="entry name" value="GTPase Der"/>
    <property type="match status" value="1"/>
</dbReference>
<dbReference type="Gene3D" id="3.30.300.20">
    <property type="match status" value="1"/>
</dbReference>
<dbReference type="Gene3D" id="3.40.50.300">
    <property type="entry name" value="P-loop containing nucleotide triphosphate hydrolases"/>
    <property type="match status" value="2"/>
</dbReference>
<dbReference type="HAMAP" id="MF_00195">
    <property type="entry name" value="GTPase_Der"/>
    <property type="match status" value="1"/>
</dbReference>
<dbReference type="InterPro" id="IPR031166">
    <property type="entry name" value="G_ENGA"/>
</dbReference>
<dbReference type="InterPro" id="IPR006073">
    <property type="entry name" value="GTP-bd"/>
</dbReference>
<dbReference type="InterPro" id="IPR016484">
    <property type="entry name" value="GTPase_Der"/>
</dbReference>
<dbReference type="InterPro" id="IPR032859">
    <property type="entry name" value="KH_dom-like"/>
</dbReference>
<dbReference type="InterPro" id="IPR015946">
    <property type="entry name" value="KH_dom-like_a/b"/>
</dbReference>
<dbReference type="InterPro" id="IPR027417">
    <property type="entry name" value="P-loop_NTPase"/>
</dbReference>
<dbReference type="InterPro" id="IPR005225">
    <property type="entry name" value="Small_GTP-bd"/>
</dbReference>
<dbReference type="NCBIfam" id="TIGR03594">
    <property type="entry name" value="GTPase_EngA"/>
    <property type="match status" value="1"/>
</dbReference>
<dbReference type="NCBIfam" id="TIGR00231">
    <property type="entry name" value="small_GTP"/>
    <property type="match status" value="2"/>
</dbReference>
<dbReference type="PANTHER" id="PTHR43834">
    <property type="entry name" value="GTPASE DER"/>
    <property type="match status" value="1"/>
</dbReference>
<dbReference type="PANTHER" id="PTHR43834:SF6">
    <property type="entry name" value="GTPASE DER"/>
    <property type="match status" value="1"/>
</dbReference>
<dbReference type="Pfam" id="PF14714">
    <property type="entry name" value="KH_dom-like"/>
    <property type="match status" value="1"/>
</dbReference>
<dbReference type="Pfam" id="PF01926">
    <property type="entry name" value="MMR_HSR1"/>
    <property type="match status" value="2"/>
</dbReference>
<dbReference type="PIRSF" id="PIRSF006485">
    <property type="entry name" value="GTP-binding_EngA"/>
    <property type="match status" value="1"/>
</dbReference>
<dbReference type="PRINTS" id="PR00326">
    <property type="entry name" value="GTP1OBG"/>
</dbReference>
<dbReference type="SUPFAM" id="SSF52540">
    <property type="entry name" value="P-loop containing nucleoside triphosphate hydrolases"/>
    <property type="match status" value="2"/>
</dbReference>
<dbReference type="PROSITE" id="PS51712">
    <property type="entry name" value="G_ENGA"/>
    <property type="match status" value="2"/>
</dbReference>
<sequence length="436" mass="49082">MALPTIAIVGRPNVGKSTLFNRIAGERISIVEDVEGVTRDRIYATGEWLNRSFSMIDTGGIDDVDAPFMEQIKHQAEIAMEEADVIVFVVSGKEGITDADEYVARKLYKTHKPVILAVNKVDNPEMRNDIYDFYALGLGEPLPISSVHGIGTGDVLDAIVENLPNEYEEENPDVIKFSLIGRPNVGKSSLINAILGEDRVIASPVAGTTRDAIDTHFTDTDGQEFTMIDTAGMRKSGKVYENTEKYSVMRAMRAIDRSDVVLMVINAEEGIREYDKRIAGFAHEAGKGMIIVVNKWDTLEKDNHTMKNWEEDIREQFQYLPYAPIIFVSALTKQRLHKLPEMIKQISESQNTRIPSAVLNDVIMDAIAINPTPTDKGKRLKIFYATQVATKPPTFVIFVNEEELMHFSYLRFLENQIRKAFVFEGTPIHLIARKRK</sequence>
<evidence type="ECO:0000255" key="1">
    <source>
        <dbReference type="HAMAP-Rule" id="MF_00195"/>
    </source>
</evidence>
<feature type="chain" id="PRO_1000099166" description="GTPase Der">
    <location>
        <begin position="1"/>
        <end position="436"/>
    </location>
</feature>
<feature type="domain" description="EngA-type G 1">
    <location>
        <begin position="4"/>
        <end position="167"/>
    </location>
</feature>
<feature type="domain" description="EngA-type G 2">
    <location>
        <begin position="175"/>
        <end position="351"/>
    </location>
</feature>
<feature type="domain" description="KH-like" evidence="1">
    <location>
        <begin position="352"/>
        <end position="436"/>
    </location>
</feature>
<feature type="binding site" evidence="1">
    <location>
        <begin position="10"/>
        <end position="17"/>
    </location>
    <ligand>
        <name>GTP</name>
        <dbReference type="ChEBI" id="CHEBI:37565"/>
        <label>1</label>
    </ligand>
</feature>
<feature type="binding site" evidence="1">
    <location>
        <begin position="57"/>
        <end position="61"/>
    </location>
    <ligand>
        <name>GTP</name>
        <dbReference type="ChEBI" id="CHEBI:37565"/>
        <label>1</label>
    </ligand>
</feature>
<feature type="binding site" evidence="1">
    <location>
        <begin position="119"/>
        <end position="122"/>
    </location>
    <ligand>
        <name>GTP</name>
        <dbReference type="ChEBI" id="CHEBI:37565"/>
        <label>1</label>
    </ligand>
</feature>
<feature type="binding site" evidence="1">
    <location>
        <begin position="181"/>
        <end position="188"/>
    </location>
    <ligand>
        <name>GTP</name>
        <dbReference type="ChEBI" id="CHEBI:37565"/>
        <label>2</label>
    </ligand>
</feature>
<feature type="binding site" evidence="1">
    <location>
        <begin position="229"/>
        <end position="233"/>
    </location>
    <ligand>
        <name>GTP</name>
        <dbReference type="ChEBI" id="CHEBI:37565"/>
        <label>2</label>
    </ligand>
</feature>
<feature type="binding site" evidence="1">
    <location>
        <begin position="294"/>
        <end position="297"/>
    </location>
    <ligand>
        <name>GTP</name>
        <dbReference type="ChEBI" id="CHEBI:37565"/>
        <label>2</label>
    </ligand>
</feature>
<gene>
    <name evidence="1" type="primary">der</name>
    <name type="synonym">engA</name>
    <name type="ordered locus">SPCG_1681</name>
</gene>
<organism>
    <name type="scientific">Streptococcus pneumoniae (strain CGSP14)</name>
    <dbReference type="NCBI Taxonomy" id="516950"/>
    <lineage>
        <taxon>Bacteria</taxon>
        <taxon>Bacillati</taxon>
        <taxon>Bacillota</taxon>
        <taxon>Bacilli</taxon>
        <taxon>Lactobacillales</taxon>
        <taxon>Streptococcaceae</taxon>
        <taxon>Streptococcus</taxon>
    </lineage>
</organism>